<proteinExistence type="evidence at protein level"/>
<accession>P0DXG4</accession>
<dbReference type="EC" id="6.2.1.37" evidence="1"/>
<dbReference type="EMBL" id="CP011072">
    <property type="protein sequence ID" value="AKU14498.1"/>
    <property type="molecule type" value="Genomic_DNA"/>
</dbReference>
<dbReference type="RefSeq" id="WP_050418023.1">
    <property type="nucleotide sequence ID" value="NZ_CP011072.1"/>
</dbReference>
<dbReference type="SMR" id="P0DXG4"/>
<dbReference type="KEGG" id="azi:AzCIB_4612"/>
<dbReference type="GO" id="GO:0016878">
    <property type="term" value="F:acid-thiol ligase activity"/>
    <property type="evidence" value="ECO:0007669"/>
    <property type="project" value="TreeGrafter"/>
</dbReference>
<dbReference type="GO" id="GO:0005524">
    <property type="term" value="F:ATP binding"/>
    <property type="evidence" value="ECO:0007669"/>
    <property type="project" value="UniProtKB-KW"/>
</dbReference>
<dbReference type="GO" id="GO:0016405">
    <property type="term" value="F:CoA-ligase activity"/>
    <property type="evidence" value="ECO:0007669"/>
    <property type="project" value="InterPro"/>
</dbReference>
<dbReference type="GO" id="GO:0044550">
    <property type="term" value="P:secondary metabolite biosynthetic process"/>
    <property type="evidence" value="ECO:0007669"/>
    <property type="project" value="TreeGrafter"/>
</dbReference>
<dbReference type="Gene3D" id="3.30.300.30">
    <property type="match status" value="1"/>
</dbReference>
<dbReference type="Gene3D" id="3.40.50.12780">
    <property type="entry name" value="N-terminal domain of ligase-like"/>
    <property type="match status" value="1"/>
</dbReference>
<dbReference type="InterPro" id="IPR025110">
    <property type="entry name" value="AMP-bd_C"/>
</dbReference>
<dbReference type="InterPro" id="IPR045851">
    <property type="entry name" value="AMP-bd_C_sf"/>
</dbReference>
<dbReference type="InterPro" id="IPR000873">
    <property type="entry name" value="AMP-dep_synth/lig_dom"/>
</dbReference>
<dbReference type="InterPro" id="IPR042099">
    <property type="entry name" value="ANL_N_sf"/>
</dbReference>
<dbReference type="InterPro" id="IPR011957">
    <property type="entry name" value="Benz_CoA_lig"/>
</dbReference>
<dbReference type="NCBIfam" id="TIGR02262">
    <property type="entry name" value="benz_CoA_lig"/>
    <property type="match status" value="1"/>
</dbReference>
<dbReference type="PANTHER" id="PTHR43352">
    <property type="entry name" value="ACETYL-COA SYNTHETASE"/>
    <property type="match status" value="1"/>
</dbReference>
<dbReference type="PANTHER" id="PTHR43352:SF1">
    <property type="entry name" value="ANTHRANILATE--COA LIGASE"/>
    <property type="match status" value="1"/>
</dbReference>
<dbReference type="Pfam" id="PF00501">
    <property type="entry name" value="AMP-binding"/>
    <property type="match status" value="1"/>
</dbReference>
<dbReference type="Pfam" id="PF13193">
    <property type="entry name" value="AMP-binding_C"/>
    <property type="match status" value="1"/>
</dbReference>
<dbReference type="SUPFAM" id="SSF56801">
    <property type="entry name" value="Acetyl-CoA synthetase-like"/>
    <property type="match status" value="1"/>
</dbReference>
<organism>
    <name type="scientific">Aromatoleum sp. (strain CIB)</name>
    <name type="common">Azoarcus sp. (strain CIB)</name>
    <dbReference type="NCBI Taxonomy" id="198107"/>
    <lineage>
        <taxon>Bacteria</taxon>
        <taxon>Pseudomonadati</taxon>
        <taxon>Pseudomonadota</taxon>
        <taxon>Betaproteobacteria</taxon>
        <taxon>Rhodocyclales</taxon>
        <taxon>Zoogloeaceae</taxon>
        <taxon>Azoarcus</taxon>
    </lineage>
</organism>
<feature type="chain" id="PRO_0000461512" description="3-hydroxybenzoate--CoA ligase">
    <location>
        <begin position="1"/>
        <end position="523"/>
    </location>
</feature>
<protein>
    <recommendedName>
        <fullName evidence="2">3-hydroxybenzoate--CoA ligase</fullName>
        <ecNumber evidence="1">6.2.1.37</ecNumber>
    </recommendedName>
    <alternativeName>
        <fullName evidence="2">3OHBz-CoA ligase</fullName>
    </alternativeName>
</protein>
<reference key="1">
    <citation type="journal article" date="2015" name="Syst. Appl. Microbiol.">
        <title>Whole-genome analysis of Azoarcus sp. strain CIB provides genetic insights to its different lifestyles and predicts novel metabolic features.</title>
        <authorList>
            <person name="Martin-Moldes Z."/>
            <person name="Zamarro M.T."/>
            <person name="Del Cerro C."/>
            <person name="Valencia A."/>
            <person name="Gomez M.J."/>
            <person name="Arcas A."/>
            <person name="Udaondo Z."/>
            <person name="Garcia J.L."/>
            <person name="Nogales J."/>
            <person name="Carmona M."/>
            <person name="Diaz E."/>
        </authorList>
    </citation>
    <scope>NUCLEOTIDE SEQUENCE [LARGE SCALE GENOMIC DNA]</scope>
    <source>
        <strain>CIB</strain>
    </source>
</reference>
<reference key="2">
    <citation type="journal article" date="2024" name="Microbiol. Res.">
        <title>Transcriptional regulation of the anaerobic 3-hydroxybenzoate degradation pathway in Aromatoleum sp. CIB.</title>
        <authorList>
            <person name="Fernandez-Arevalo U."/>
            <person name="Fuchs J."/>
            <person name="Boll M."/>
            <person name="Diaz E."/>
        </authorList>
    </citation>
    <scope>FUNCTION</scope>
    <scope>CATALYTIC ACTIVITY</scope>
    <scope>INDUCTION</scope>
    <source>
        <strain>CIB</strain>
    </source>
</reference>
<evidence type="ECO:0000269" key="1">
    <source>
    </source>
</evidence>
<evidence type="ECO:0000303" key="2">
    <source>
    </source>
</evidence>
<evidence type="ECO:0000305" key="3"/>
<evidence type="ECO:0000312" key="4">
    <source>
        <dbReference type="EMBL" id="AKU14498.1"/>
    </source>
</evidence>
<gene>
    <name evidence="2" type="primary">hbdA</name>
    <name evidence="4" type="ordered locus">AzCIB_4612</name>
</gene>
<sequence length="523" mass="56826">MSFDNSARCGAMNAADEIIGPPLAQGLADQPAIVGGARSVTYGELEAMVNRTGNAMKAHGVGRGERVLFLMDDSPEMVAGYLGAMRIGAVAVALNVRLAPRDVRYVIEDSACRLLFVDAEFAHLYQEIAGELADPPQVVVRGAPQRIGMALDDFVAGQPDTLASEPAAPEDIAFWVYSSGTTGRPKAVMHSHGCVLIADRMEAEYFGVRPGDRIFATSKMFFGWALGHSMMGGLRCGATVIVAAGWPDPVRMIEVVDTHRPTLFFSTPVMYRNLLREGVGASEGFRNVRHFLSAGEKLPETLYQSWLEATGKPLIDGIGASETIFLFLVNDAGAQRPGSCGKPVPWAEVRLVDEAGADVVEPDIPGQIAIRTPSQFRGYWNLPEQTAKSLRDGWYFPGDMFSFDRDGYWYHNGRADDMLKISGQWVSPSEIEGCAMTAPGIAEAVVVGVPQEDGLTRLVLVAVPKDPSASQSRLSTQVQDTLMANLSIYKCPRTVRFVDELPRTATGKIQKFRLRELLKAGRL</sequence>
<name>HBDA_AROS1</name>
<comment type="function">
    <text evidence="1">Ligase involved in the anaerobic degradation of 3-hydroxybenzoate (3OHBz) (PubMed:39216330). Catalyzes the activation of 3-hydroxybenzoate to 3-hydroxybenzoyl-CoA (PubMed:39216330). Also shows high activity with protocatechuate and 4-hydroxybenzoate (PubMed:39216330). Exhibits lower activity with benzoate, but cannot use 2-hydroxybenzoate or benzoate analogs containing other substituents at the ortho position, such as 2-aminobenzoate (anthranilate) (PubMed:39216330).</text>
</comment>
<comment type="catalytic activity">
    <reaction evidence="1">
        <text>3-hydroxybenzoate + ATP + CoA = 3-hydroxybenzoyl-CoA + AMP + diphosphate</text>
        <dbReference type="Rhea" id="RHEA:25070"/>
        <dbReference type="ChEBI" id="CHEBI:16193"/>
        <dbReference type="ChEBI" id="CHEBI:30616"/>
        <dbReference type="ChEBI" id="CHEBI:33019"/>
        <dbReference type="ChEBI" id="CHEBI:57287"/>
        <dbReference type="ChEBI" id="CHEBI:57342"/>
        <dbReference type="ChEBI" id="CHEBI:456215"/>
        <dbReference type="EC" id="6.2.1.37"/>
    </reaction>
</comment>
<comment type="catalytic activity">
    <reaction evidence="1">
        <text>4-hydroxybenzoate + ATP + CoA = 4-hydroxybenzoyl-CoA + AMP + diphosphate</text>
        <dbReference type="Rhea" id="RHEA:23116"/>
        <dbReference type="ChEBI" id="CHEBI:17879"/>
        <dbReference type="ChEBI" id="CHEBI:30616"/>
        <dbReference type="ChEBI" id="CHEBI:33019"/>
        <dbReference type="ChEBI" id="CHEBI:57287"/>
        <dbReference type="ChEBI" id="CHEBI:57356"/>
        <dbReference type="ChEBI" id="CHEBI:456215"/>
    </reaction>
</comment>
<comment type="induction">
    <text evidence="1">Transcriptionally regulated by HbdR.</text>
</comment>
<comment type="similarity">
    <text evidence="3">Belongs to the ATP-dependent AMP-binding enzyme family. Benzoate-CoA ligase subfamily.</text>
</comment>
<keyword id="KW-0067">ATP-binding</keyword>
<keyword id="KW-0436">Ligase</keyword>
<keyword id="KW-0547">Nucleotide-binding</keyword>